<organism>
    <name type="scientific">Haloquadratum walsbyi (strain DSM 16790 / HBSQ001)</name>
    <dbReference type="NCBI Taxonomy" id="362976"/>
    <lineage>
        <taxon>Archaea</taxon>
        <taxon>Methanobacteriati</taxon>
        <taxon>Methanobacteriota</taxon>
        <taxon>Stenosarchaea group</taxon>
        <taxon>Halobacteria</taxon>
        <taxon>Halobacteriales</taxon>
        <taxon>Haloferacaceae</taxon>
        <taxon>Haloquadratum</taxon>
    </lineage>
</organism>
<gene>
    <name evidence="1" type="primary">panD</name>
    <name type="ordered locus">HQ_2363A</name>
</gene>
<comment type="function">
    <text evidence="1">Catalyzes the pyruvoyl-dependent decarboxylation of aspartate to produce beta-alanine.</text>
</comment>
<comment type="catalytic activity">
    <reaction evidence="1">
        <text>L-aspartate + H(+) = beta-alanine + CO2</text>
        <dbReference type="Rhea" id="RHEA:19497"/>
        <dbReference type="ChEBI" id="CHEBI:15378"/>
        <dbReference type="ChEBI" id="CHEBI:16526"/>
        <dbReference type="ChEBI" id="CHEBI:29991"/>
        <dbReference type="ChEBI" id="CHEBI:57966"/>
        <dbReference type="EC" id="4.1.1.11"/>
    </reaction>
</comment>
<comment type="cofactor">
    <cofactor evidence="1">
        <name>pyruvate</name>
        <dbReference type="ChEBI" id="CHEBI:15361"/>
    </cofactor>
    <text evidence="1">Binds 1 pyruvoyl group covalently per subunit.</text>
</comment>
<comment type="pathway">
    <text evidence="1">Cofactor biosynthesis; (R)-pantothenate biosynthesis; beta-alanine from L-aspartate: step 1/1.</text>
</comment>
<comment type="subunit">
    <text evidence="1">Heterooctamer of four alpha and four beta subunits.</text>
</comment>
<comment type="subcellular location">
    <subcellularLocation>
        <location evidence="1">Cytoplasm</location>
    </subcellularLocation>
</comment>
<comment type="PTM">
    <text evidence="1">Is synthesized initially as an inactive proenzyme, which is activated by self-cleavage at a specific serine bond to produce a beta-subunit with a hydroxyl group at its C-terminus and an alpha-subunit with a pyruvoyl group at its N-terminus.</text>
</comment>
<comment type="similarity">
    <text evidence="1">Belongs to the PanD family.</text>
</comment>
<keyword id="KW-0068">Autocatalytic cleavage</keyword>
<keyword id="KW-0963">Cytoplasm</keyword>
<keyword id="KW-0210">Decarboxylase</keyword>
<keyword id="KW-0456">Lyase</keyword>
<keyword id="KW-0566">Pantothenate biosynthesis</keyword>
<keyword id="KW-0670">Pyruvate</keyword>
<keyword id="KW-1185">Reference proteome</keyword>
<keyword id="KW-0704">Schiff base</keyword>
<keyword id="KW-0865">Zymogen</keyword>
<reference key="1">
    <citation type="journal article" date="2006" name="BMC Genomics">
        <title>The genome of the square archaeon Haloquadratum walsbyi: life at the limits of water activity.</title>
        <authorList>
            <person name="Bolhuis H."/>
            <person name="Palm P."/>
            <person name="Wende A."/>
            <person name="Falb M."/>
            <person name="Rampp M."/>
            <person name="Rodriguez-Valera F."/>
            <person name="Pfeiffer F."/>
            <person name="Oesterhelt D."/>
        </authorList>
    </citation>
    <scope>NUCLEOTIDE SEQUENCE [LARGE SCALE GENOMIC DNA]</scope>
    <source>
        <strain>DSM 16790 / HBSQ001</strain>
    </source>
</reference>
<sequence>MRRWLLKSKLHRARVTGTEKDYEGSISIDAALLSEADIAVGEQVQVVNVTNGERFETYTIEGESRQMELNGAAARLAETGDVIIVISYGLYVKDEQPEPTVLLLDEENRISERE</sequence>
<feature type="chain" id="PRO_0000307089" description="Aspartate 1-decarboxylase beta chain" evidence="1">
    <location>
        <begin position="1"/>
        <end position="24"/>
    </location>
</feature>
<feature type="chain" id="PRO_0000307090" description="Aspartate 1-decarboxylase alpha chain" evidence="1">
    <location>
        <begin position="25"/>
        <end position="114"/>
    </location>
</feature>
<feature type="active site" description="Schiff-base intermediate with substrate; via pyruvic acid" evidence="1">
    <location>
        <position position="25"/>
    </location>
</feature>
<feature type="active site" description="Proton donor" evidence="1">
    <location>
        <position position="58"/>
    </location>
</feature>
<feature type="binding site" evidence="1">
    <location>
        <position position="57"/>
    </location>
    <ligand>
        <name>substrate</name>
    </ligand>
</feature>
<feature type="binding site" evidence="1">
    <location>
        <begin position="71"/>
        <end position="73"/>
    </location>
    <ligand>
        <name>substrate</name>
    </ligand>
</feature>
<feature type="modified residue" description="Pyruvic acid (Ser)" evidence="1">
    <location>
        <position position="25"/>
    </location>
</feature>
<protein>
    <recommendedName>
        <fullName evidence="1">Aspartate 1-decarboxylase</fullName>
        <ecNumber evidence="1">4.1.1.11</ecNumber>
    </recommendedName>
    <alternativeName>
        <fullName evidence="1">Aspartate alpha-decarboxylase</fullName>
    </alternativeName>
    <component>
        <recommendedName>
            <fullName evidence="1">Aspartate 1-decarboxylase beta chain</fullName>
        </recommendedName>
    </component>
    <component>
        <recommendedName>
            <fullName evidence="1">Aspartate 1-decarboxylase alpha chain</fullName>
        </recommendedName>
    </component>
</protein>
<evidence type="ECO:0000255" key="1">
    <source>
        <dbReference type="HAMAP-Rule" id="MF_00446"/>
    </source>
</evidence>
<accession>Q18HQ3</accession>
<proteinExistence type="inferred from homology"/>
<name>PAND_HALWD</name>
<dbReference type="EC" id="4.1.1.11" evidence="1"/>
<dbReference type="EMBL" id="AM180088">
    <property type="protein sequence ID" value="CAJ52484.1"/>
    <property type="molecule type" value="Genomic_DNA"/>
</dbReference>
<dbReference type="RefSeq" id="WP_011571608.1">
    <property type="nucleotide sequence ID" value="NC_008212.1"/>
</dbReference>
<dbReference type="SMR" id="Q18HQ3"/>
<dbReference type="STRING" id="362976.HQ_2363A"/>
<dbReference type="GeneID" id="4194405"/>
<dbReference type="KEGG" id="hwa:HQ_2363A"/>
<dbReference type="eggNOG" id="arCOG04813">
    <property type="taxonomic scope" value="Archaea"/>
</dbReference>
<dbReference type="HOGENOM" id="CLU_115305_2_1_2"/>
<dbReference type="UniPathway" id="UPA00028">
    <property type="reaction ID" value="UER00002"/>
</dbReference>
<dbReference type="Proteomes" id="UP000001975">
    <property type="component" value="Chromosome"/>
</dbReference>
<dbReference type="GO" id="GO:0005829">
    <property type="term" value="C:cytosol"/>
    <property type="evidence" value="ECO:0007669"/>
    <property type="project" value="TreeGrafter"/>
</dbReference>
<dbReference type="GO" id="GO:0004068">
    <property type="term" value="F:aspartate 1-decarboxylase activity"/>
    <property type="evidence" value="ECO:0007669"/>
    <property type="project" value="UniProtKB-UniRule"/>
</dbReference>
<dbReference type="GO" id="GO:0006523">
    <property type="term" value="P:alanine biosynthetic process"/>
    <property type="evidence" value="ECO:0007669"/>
    <property type="project" value="InterPro"/>
</dbReference>
<dbReference type="GO" id="GO:0015940">
    <property type="term" value="P:pantothenate biosynthetic process"/>
    <property type="evidence" value="ECO:0007669"/>
    <property type="project" value="UniProtKB-UniRule"/>
</dbReference>
<dbReference type="CDD" id="cd06919">
    <property type="entry name" value="Asp_decarbox"/>
    <property type="match status" value="1"/>
</dbReference>
<dbReference type="Gene3D" id="2.40.40.20">
    <property type="match status" value="1"/>
</dbReference>
<dbReference type="HAMAP" id="MF_00446">
    <property type="entry name" value="PanD"/>
    <property type="match status" value="1"/>
</dbReference>
<dbReference type="InterPro" id="IPR009010">
    <property type="entry name" value="Asp_de-COase-like_dom_sf"/>
</dbReference>
<dbReference type="InterPro" id="IPR003190">
    <property type="entry name" value="Asp_decarbox"/>
</dbReference>
<dbReference type="NCBIfam" id="TIGR00223">
    <property type="entry name" value="panD"/>
    <property type="match status" value="1"/>
</dbReference>
<dbReference type="PANTHER" id="PTHR21012">
    <property type="entry name" value="ASPARTATE 1-DECARBOXYLASE"/>
    <property type="match status" value="1"/>
</dbReference>
<dbReference type="PANTHER" id="PTHR21012:SF0">
    <property type="entry name" value="ASPARTATE 1-DECARBOXYLASE"/>
    <property type="match status" value="1"/>
</dbReference>
<dbReference type="Pfam" id="PF02261">
    <property type="entry name" value="Asp_decarbox"/>
    <property type="match status" value="1"/>
</dbReference>
<dbReference type="PIRSF" id="PIRSF006246">
    <property type="entry name" value="Asp_decarbox"/>
    <property type="match status" value="1"/>
</dbReference>
<dbReference type="SUPFAM" id="SSF50692">
    <property type="entry name" value="ADC-like"/>
    <property type="match status" value="1"/>
</dbReference>